<reference key="1">
    <citation type="journal article" date="2011" name="Genome Biol.">
        <title>Comparative and functional genomics provide insights into the pathogenicity of dermatophytic fungi.</title>
        <authorList>
            <person name="Burmester A."/>
            <person name="Shelest E."/>
            <person name="Gloeckner G."/>
            <person name="Heddergott C."/>
            <person name="Schindler S."/>
            <person name="Staib P."/>
            <person name="Heidel A."/>
            <person name="Felder M."/>
            <person name="Petzold A."/>
            <person name="Szafranski K."/>
            <person name="Feuermann M."/>
            <person name="Pedruzzi I."/>
            <person name="Priebe S."/>
            <person name="Groth M."/>
            <person name="Winkler R."/>
            <person name="Li W."/>
            <person name="Kniemeyer O."/>
            <person name="Schroeckh V."/>
            <person name="Hertweck C."/>
            <person name="Hube B."/>
            <person name="White T.C."/>
            <person name="Platzer M."/>
            <person name="Guthke R."/>
            <person name="Heitman J."/>
            <person name="Woestemeyer J."/>
            <person name="Zipfel P.F."/>
            <person name="Monod M."/>
            <person name="Brakhage A.A."/>
        </authorList>
    </citation>
    <scope>NUCLEOTIDE SEQUENCE [LARGE SCALE GENOMIC DNA]</scope>
    <source>
        <strain>HKI 0517</strain>
    </source>
</reference>
<accession>D4DIW9</accession>
<evidence type="ECO:0000250" key="1"/>
<evidence type="ECO:0000255" key="2"/>
<evidence type="ECO:0000255" key="3">
    <source>
        <dbReference type="PROSITE-ProRule" id="PRU01240"/>
    </source>
</evidence>
<evidence type="ECO:0000256" key="4">
    <source>
        <dbReference type="SAM" id="MobiDB-lite"/>
    </source>
</evidence>
<evidence type="ECO:0000305" key="5"/>
<sequence>MGVFRFISISLAAVSAANAAQILSMPHAQTVPNSYIVMMKDDTSDDDFNHHQSWLQSTHTHNITRRATIQNAGMRHKYNFSKMKGYSGIFDEETIKDIAKDPKVMFVEPDTIISVHGKVEQSNVPSWGLARISNPQPGAGSYIYDSSAGEGITVYSVDTGVDVNHEDFEGRAIWGSNQVNDGDDRDGSGHGTHTSGTMVGKEFGIAKKAKLVAVKVLGNDGSGPTSGIVAGINWSVEHARQNGGTKKAVMNMSLGGSSSSALNRAAAQAVEQGMFLSVAAGNDNQDAQSSSPASEPSVCTVGSSAEDDSRSSFSNWGPAIDLFAPGSNIISARPGGGSQSMSGTSMAAPHVAGLAAYLMALEGISGGAVCDRLKELGTSSITDAGPGTPTNVLINNGGAKGGKPNPNPAPSPSPSPSQPSEPQQPTPSQPGQPGEPFPGEPQQPTPSQPGQPGEPFPGEPFPGEPFPGEPFPGESAPAPAPQHPHTPYPGGDNFDFDGFWKKYFGGEHWRKMFSSFWN</sequence>
<comment type="function">
    <text evidence="1">Secreted subtilisin-like serine protease with keratinolytic activity that contributes to pathogenicity.</text>
</comment>
<comment type="subcellular location">
    <subcellularLocation>
        <location evidence="1">Secreted</location>
    </subcellularLocation>
</comment>
<comment type="similarity">
    <text evidence="5">Belongs to the peptidase S8 family.</text>
</comment>
<keyword id="KW-0325">Glycoprotein</keyword>
<keyword id="KW-0378">Hydrolase</keyword>
<keyword id="KW-0645">Protease</keyword>
<keyword id="KW-0964">Secreted</keyword>
<keyword id="KW-0720">Serine protease</keyword>
<keyword id="KW-0732">Signal</keyword>
<keyword id="KW-0843">Virulence</keyword>
<keyword id="KW-0865">Zymogen</keyword>
<protein>
    <recommendedName>
        <fullName>Subtilisin-like protease 1</fullName>
        <ecNumber>3.4.21.-</ecNumber>
    </recommendedName>
</protein>
<proteinExistence type="inferred from homology"/>
<organism>
    <name type="scientific">Trichophyton verrucosum (strain HKI 0517)</name>
    <dbReference type="NCBI Taxonomy" id="663202"/>
    <lineage>
        <taxon>Eukaryota</taxon>
        <taxon>Fungi</taxon>
        <taxon>Dikarya</taxon>
        <taxon>Ascomycota</taxon>
        <taxon>Pezizomycotina</taxon>
        <taxon>Eurotiomycetes</taxon>
        <taxon>Eurotiomycetidae</taxon>
        <taxon>Onygenales</taxon>
        <taxon>Arthrodermataceae</taxon>
        <taxon>Trichophyton</taxon>
    </lineage>
</organism>
<gene>
    <name type="primary">SUB1</name>
    <name type="ORF">TRV_07130</name>
</gene>
<dbReference type="EC" id="3.4.21.-"/>
<dbReference type="EMBL" id="ACYE01000415">
    <property type="protein sequence ID" value="EFE38217.1"/>
    <property type="molecule type" value="Genomic_DNA"/>
</dbReference>
<dbReference type="RefSeq" id="XP_003018862.1">
    <property type="nucleotide sequence ID" value="XM_003018816.1"/>
</dbReference>
<dbReference type="SMR" id="D4DIW9"/>
<dbReference type="MEROPS" id="S08.025"/>
<dbReference type="GlyCosmos" id="D4DIW9">
    <property type="glycosylation" value="2 sites, No reported glycans"/>
</dbReference>
<dbReference type="GeneID" id="9581506"/>
<dbReference type="KEGG" id="tve:TRV_07130"/>
<dbReference type="HOGENOM" id="CLU_011263_1_5_1"/>
<dbReference type="OrthoDB" id="7034at34384"/>
<dbReference type="Proteomes" id="UP000008383">
    <property type="component" value="Unassembled WGS sequence"/>
</dbReference>
<dbReference type="GO" id="GO:0005576">
    <property type="term" value="C:extracellular region"/>
    <property type="evidence" value="ECO:0007669"/>
    <property type="project" value="UniProtKB-SubCell"/>
</dbReference>
<dbReference type="GO" id="GO:0004252">
    <property type="term" value="F:serine-type endopeptidase activity"/>
    <property type="evidence" value="ECO:0007669"/>
    <property type="project" value="InterPro"/>
</dbReference>
<dbReference type="GO" id="GO:0006508">
    <property type="term" value="P:proteolysis"/>
    <property type="evidence" value="ECO:0007669"/>
    <property type="project" value="UniProtKB-KW"/>
</dbReference>
<dbReference type="CDD" id="cd04077">
    <property type="entry name" value="Peptidases_S8_PCSK9_ProteinaseK_like"/>
    <property type="match status" value="1"/>
</dbReference>
<dbReference type="FunFam" id="3.40.50.200:FF:000014">
    <property type="entry name" value="Proteinase K"/>
    <property type="match status" value="1"/>
</dbReference>
<dbReference type="Gene3D" id="3.30.70.80">
    <property type="entry name" value="Peptidase S8 propeptide/proteinase inhibitor I9"/>
    <property type="match status" value="1"/>
</dbReference>
<dbReference type="Gene3D" id="3.40.50.200">
    <property type="entry name" value="Peptidase S8/S53 domain"/>
    <property type="match status" value="1"/>
</dbReference>
<dbReference type="InterPro" id="IPR034193">
    <property type="entry name" value="PCSK9_ProteinaseK-like"/>
</dbReference>
<dbReference type="InterPro" id="IPR000209">
    <property type="entry name" value="Peptidase_S8/S53_dom"/>
</dbReference>
<dbReference type="InterPro" id="IPR036852">
    <property type="entry name" value="Peptidase_S8/S53_dom_sf"/>
</dbReference>
<dbReference type="InterPro" id="IPR023828">
    <property type="entry name" value="Peptidase_S8_Ser-AS"/>
</dbReference>
<dbReference type="InterPro" id="IPR050131">
    <property type="entry name" value="Peptidase_S8_subtilisin-like"/>
</dbReference>
<dbReference type="InterPro" id="IPR015500">
    <property type="entry name" value="Peptidase_S8_subtilisin-rel"/>
</dbReference>
<dbReference type="InterPro" id="IPR010259">
    <property type="entry name" value="S8pro/Inhibitor_I9"/>
</dbReference>
<dbReference type="InterPro" id="IPR037045">
    <property type="entry name" value="S8pro/Inhibitor_I9_sf"/>
</dbReference>
<dbReference type="PANTHER" id="PTHR43806:SF58">
    <property type="entry name" value="ALKALINE PROTEASE 1-RELATED"/>
    <property type="match status" value="1"/>
</dbReference>
<dbReference type="PANTHER" id="PTHR43806">
    <property type="entry name" value="PEPTIDASE S8"/>
    <property type="match status" value="1"/>
</dbReference>
<dbReference type="Pfam" id="PF05922">
    <property type="entry name" value="Inhibitor_I9"/>
    <property type="match status" value="1"/>
</dbReference>
<dbReference type="Pfam" id="PF00082">
    <property type="entry name" value="Peptidase_S8"/>
    <property type="match status" value="1"/>
</dbReference>
<dbReference type="PRINTS" id="PR00723">
    <property type="entry name" value="SUBTILISIN"/>
</dbReference>
<dbReference type="SUPFAM" id="SSF54897">
    <property type="entry name" value="Protease propeptides/inhibitors"/>
    <property type="match status" value="1"/>
</dbReference>
<dbReference type="SUPFAM" id="SSF52743">
    <property type="entry name" value="Subtilisin-like"/>
    <property type="match status" value="1"/>
</dbReference>
<dbReference type="PROSITE" id="PS51892">
    <property type="entry name" value="SUBTILASE"/>
    <property type="match status" value="1"/>
</dbReference>
<dbReference type="PROSITE" id="PS00138">
    <property type="entry name" value="SUBTILASE_SER"/>
    <property type="match status" value="1"/>
</dbReference>
<name>SUB1_TRIVH</name>
<feature type="signal peptide" evidence="2">
    <location>
        <begin position="1"/>
        <end position="19"/>
    </location>
</feature>
<feature type="propeptide" id="PRO_0000397780" evidence="1">
    <location>
        <begin position="20"/>
        <end position="116"/>
    </location>
</feature>
<feature type="chain" id="PRO_0000397781" description="Subtilisin-like protease 1">
    <location>
        <begin position="117"/>
        <end position="518"/>
    </location>
</feature>
<feature type="domain" description="Inhibitor I9" evidence="2">
    <location>
        <begin position="34"/>
        <end position="115"/>
    </location>
</feature>
<feature type="domain" description="Peptidase S8" evidence="3">
    <location>
        <begin position="126"/>
        <end position="400"/>
    </location>
</feature>
<feature type="region of interest" description="Disordered" evidence="4">
    <location>
        <begin position="175"/>
        <end position="198"/>
    </location>
</feature>
<feature type="region of interest" description="Disordered" evidence="4">
    <location>
        <begin position="282"/>
        <end position="312"/>
    </location>
</feature>
<feature type="region of interest" description="Disordered" evidence="4">
    <location>
        <begin position="378"/>
        <end position="496"/>
    </location>
</feature>
<feature type="compositionally biased region" description="Polar residues" evidence="4">
    <location>
        <begin position="282"/>
        <end position="294"/>
    </location>
</feature>
<feature type="compositionally biased region" description="Polar residues" evidence="4">
    <location>
        <begin position="378"/>
        <end position="394"/>
    </location>
</feature>
<feature type="compositionally biased region" description="Pro residues" evidence="4">
    <location>
        <begin position="405"/>
        <end position="470"/>
    </location>
</feature>
<feature type="compositionally biased region" description="Pro residues" evidence="4">
    <location>
        <begin position="478"/>
        <end position="487"/>
    </location>
</feature>
<feature type="active site" description="Charge relay system" evidence="3">
    <location>
        <position position="158"/>
    </location>
</feature>
<feature type="active site" description="Charge relay system" evidence="3">
    <location>
        <position position="190"/>
    </location>
</feature>
<feature type="active site" description="Charge relay system" evidence="3">
    <location>
        <position position="345"/>
    </location>
</feature>
<feature type="glycosylation site" description="N-linked (GlcNAc...) asparagine" evidence="2">
    <location>
        <position position="233"/>
    </location>
</feature>
<feature type="glycosylation site" description="N-linked (GlcNAc...) asparagine" evidence="2">
    <location>
        <position position="251"/>
    </location>
</feature>